<keyword id="KW-0460">Magnesium</keyword>
<keyword id="KW-0464">Manganese</keyword>
<keyword id="KW-0474">Menaquinone biosynthesis</keyword>
<keyword id="KW-0479">Metal-binding</keyword>
<keyword id="KW-1185">Reference proteome</keyword>
<keyword id="KW-0786">Thiamine pyrophosphate</keyword>
<keyword id="KW-0808">Transferase</keyword>
<sequence>MYSDKKNILQLVALLEAHGITKVVLCPGSRNAPIVHTLSTHPGFTCYAMTDERSAGYFAIGLALNGGHPAAVCCTSGTALLNLHPAVAEAYYQNIPLVVISADRPAAWIGQMAGQTLPQPGVFQTLVKKSVNLPEIQTEEDEWYCNRLVNEALLETNHHGKGPVHINIPISEPLFQFTVESLPEVRVITRYQGLNVYDRDYNDLIERLNRYQKRMIIVGQMNLIYLFEKRHTKLLYKHFVWLTEHIGNQTVPGIPVKNFDAALYAMPEEKTGQMTPELLITYGGHVVSKRLKKYLRQHPPKEHWHVSADGEVVDLYGSLTTVIEMDPFEFLEKIAPLLDNRVPEYPRVWENYCKTIPEPEFGYSEMSAIGALIKALPESCALHLANSSVIRYAQLYQVPSTIEVCCNRGTSGIEGSLSTAVGYAAGSDKLNFIVIGDLSFFYDMNALWNINVRPNLRILLLNNGGGEIFHTLPGLDMSGTSHKYITAVHKTSAKGWAEERGFLYQRVENEEQLAEAMKTFTQPEAMEQPVLMEVFSNKNKDARILKDYYHQLKQK</sequence>
<name>MEND_BACTN</name>
<evidence type="ECO:0000255" key="1">
    <source>
        <dbReference type="HAMAP-Rule" id="MF_01659"/>
    </source>
</evidence>
<proteinExistence type="inferred from homology"/>
<feature type="chain" id="PRO_0000341716" description="2-succinyl-5-enolpyruvyl-6-hydroxy-3-cyclohexene-1-carboxylate synthase">
    <location>
        <begin position="1"/>
        <end position="555"/>
    </location>
</feature>
<protein>
    <recommendedName>
        <fullName evidence="1">2-succinyl-5-enolpyruvyl-6-hydroxy-3-cyclohexene-1-carboxylate synthase</fullName>
        <shortName evidence="1">SEPHCHC synthase</shortName>
        <ecNumber evidence="1">2.2.1.9</ecNumber>
    </recommendedName>
    <alternativeName>
        <fullName evidence="1">Menaquinone biosynthesis protein MenD</fullName>
    </alternativeName>
</protein>
<reference key="1">
    <citation type="journal article" date="2003" name="Science">
        <title>A genomic view of the human-Bacteroides thetaiotaomicron symbiosis.</title>
        <authorList>
            <person name="Xu J."/>
            <person name="Bjursell M.K."/>
            <person name="Himrod J."/>
            <person name="Deng S."/>
            <person name="Carmichael L.K."/>
            <person name="Chiang H.C."/>
            <person name="Hooper L.V."/>
            <person name="Gordon J.I."/>
        </authorList>
    </citation>
    <scope>NUCLEOTIDE SEQUENCE [LARGE SCALE GENOMIC DNA]</scope>
    <source>
        <strain>ATCC 29148 / DSM 2079 / JCM 5827 / CCUG 10774 / NCTC 10582 / VPI-5482 / E50</strain>
    </source>
</reference>
<comment type="function">
    <text evidence="1">Catalyzes the thiamine diphosphate-dependent decarboxylation of 2-oxoglutarate and the subsequent addition of the resulting succinic semialdehyde-thiamine pyrophosphate anion to isochorismate to yield 2-succinyl-5-enolpyruvyl-6-hydroxy-3-cyclohexene-1-carboxylate (SEPHCHC).</text>
</comment>
<comment type="catalytic activity">
    <reaction evidence="1">
        <text>isochorismate + 2-oxoglutarate + H(+) = 5-enolpyruvoyl-6-hydroxy-2-succinyl-cyclohex-3-ene-1-carboxylate + CO2</text>
        <dbReference type="Rhea" id="RHEA:25593"/>
        <dbReference type="ChEBI" id="CHEBI:15378"/>
        <dbReference type="ChEBI" id="CHEBI:16526"/>
        <dbReference type="ChEBI" id="CHEBI:16810"/>
        <dbReference type="ChEBI" id="CHEBI:29780"/>
        <dbReference type="ChEBI" id="CHEBI:58818"/>
        <dbReference type="EC" id="2.2.1.9"/>
    </reaction>
</comment>
<comment type="cofactor">
    <cofactor evidence="1">
        <name>Mg(2+)</name>
        <dbReference type="ChEBI" id="CHEBI:18420"/>
    </cofactor>
    <cofactor evidence="1">
        <name>Mn(2+)</name>
        <dbReference type="ChEBI" id="CHEBI:29035"/>
    </cofactor>
</comment>
<comment type="cofactor">
    <cofactor evidence="1">
        <name>thiamine diphosphate</name>
        <dbReference type="ChEBI" id="CHEBI:58937"/>
    </cofactor>
    <text evidence="1">Binds 1 thiamine pyrophosphate per subunit.</text>
</comment>
<comment type="pathway">
    <text evidence="1">Quinol/quinone metabolism; 1,4-dihydroxy-2-naphthoate biosynthesis; 1,4-dihydroxy-2-naphthoate from chorismate: step 2/7.</text>
</comment>
<comment type="pathway">
    <text evidence="1">Quinol/quinone metabolism; menaquinone biosynthesis.</text>
</comment>
<comment type="subunit">
    <text evidence="1">Homodimer.</text>
</comment>
<comment type="similarity">
    <text evidence="1">Belongs to the TPP enzyme family. MenD subfamily.</text>
</comment>
<accession>Q89YN0</accession>
<gene>
    <name evidence="1" type="primary">menD</name>
    <name type="ordered locus">BT_4701</name>
</gene>
<dbReference type="EC" id="2.2.1.9" evidence="1"/>
<dbReference type="EMBL" id="AE015928">
    <property type="protein sequence ID" value="AAO79806.1"/>
    <property type="molecule type" value="Genomic_DNA"/>
</dbReference>
<dbReference type="RefSeq" id="NP_813612.1">
    <property type="nucleotide sequence ID" value="NC_004663.1"/>
</dbReference>
<dbReference type="RefSeq" id="WP_008766783.1">
    <property type="nucleotide sequence ID" value="NC_004663.1"/>
</dbReference>
<dbReference type="SMR" id="Q89YN0"/>
<dbReference type="FunCoup" id="Q89YN0">
    <property type="interactions" value="103"/>
</dbReference>
<dbReference type="STRING" id="226186.BT_4701"/>
<dbReference type="PaxDb" id="226186-BT_4701"/>
<dbReference type="DNASU" id="1075703"/>
<dbReference type="EnsemblBacteria" id="AAO79806">
    <property type="protein sequence ID" value="AAO79806"/>
    <property type="gene ID" value="BT_4701"/>
</dbReference>
<dbReference type="GeneID" id="60925873"/>
<dbReference type="KEGG" id="bth:BT_4701"/>
<dbReference type="PATRIC" id="fig|226186.12.peg.4780"/>
<dbReference type="eggNOG" id="COG1165">
    <property type="taxonomic scope" value="Bacteria"/>
</dbReference>
<dbReference type="HOGENOM" id="CLU_006051_3_0_10"/>
<dbReference type="InParanoid" id="Q89YN0"/>
<dbReference type="OrthoDB" id="9791859at2"/>
<dbReference type="UniPathway" id="UPA00079"/>
<dbReference type="UniPathway" id="UPA01057">
    <property type="reaction ID" value="UER00164"/>
</dbReference>
<dbReference type="Proteomes" id="UP000001414">
    <property type="component" value="Chromosome"/>
</dbReference>
<dbReference type="GO" id="GO:0070204">
    <property type="term" value="F:2-succinyl-5-enolpyruvyl-6-hydroxy-3-cyclohexene-1-carboxylic-acid synthase activity"/>
    <property type="evidence" value="ECO:0007669"/>
    <property type="project" value="UniProtKB-UniRule"/>
</dbReference>
<dbReference type="GO" id="GO:0000287">
    <property type="term" value="F:magnesium ion binding"/>
    <property type="evidence" value="ECO:0007669"/>
    <property type="project" value="UniProtKB-UniRule"/>
</dbReference>
<dbReference type="GO" id="GO:0030145">
    <property type="term" value="F:manganese ion binding"/>
    <property type="evidence" value="ECO:0007669"/>
    <property type="project" value="UniProtKB-UniRule"/>
</dbReference>
<dbReference type="GO" id="GO:0030976">
    <property type="term" value="F:thiamine pyrophosphate binding"/>
    <property type="evidence" value="ECO:0007669"/>
    <property type="project" value="UniProtKB-UniRule"/>
</dbReference>
<dbReference type="GO" id="GO:0009234">
    <property type="term" value="P:menaquinone biosynthetic process"/>
    <property type="evidence" value="ECO:0007669"/>
    <property type="project" value="UniProtKB-UniRule"/>
</dbReference>
<dbReference type="CDD" id="cd07037">
    <property type="entry name" value="TPP_PYR_MenD"/>
    <property type="match status" value="1"/>
</dbReference>
<dbReference type="CDD" id="cd02009">
    <property type="entry name" value="TPP_SHCHC_synthase"/>
    <property type="match status" value="1"/>
</dbReference>
<dbReference type="Gene3D" id="3.40.50.970">
    <property type="match status" value="2"/>
</dbReference>
<dbReference type="Gene3D" id="3.40.50.1220">
    <property type="entry name" value="TPP-binding domain"/>
    <property type="match status" value="1"/>
</dbReference>
<dbReference type="HAMAP" id="MF_01659">
    <property type="entry name" value="MenD"/>
    <property type="match status" value="1"/>
</dbReference>
<dbReference type="InterPro" id="IPR004433">
    <property type="entry name" value="MenaQ_synth_MenD"/>
</dbReference>
<dbReference type="InterPro" id="IPR032264">
    <property type="entry name" value="MenD_middle"/>
</dbReference>
<dbReference type="InterPro" id="IPR029061">
    <property type="entry name" value="THDP-binding"/>
</dbReference>
<dbReference type="InterPro" id="IPR012001">
    <property type="entry name" value="Thiamin_PyroP_enz_TPP-bd_dom"/>
</dbReference>
<dbReference type="InterPro" id="IPR011766">
    <property type="entry name" value="TPP_enzyme_TPP-bd"/>
</dbReference>
<dbReference type="NCBIfam" id="TIGR00173">
    <property type="entry name" value="menD"/>
    <property type="match status" value="1"/>
</dbReference>
<dbReference type="PANTHER" id="PTHR42916">
    <property type="entry name" value="2-SUCCINYL-5-ENOLPYRUVYL-6-HYDROXY-3-CYCLOHEXENE-1-CARBOXYLATE SYNTHASE"/>
    <property type="match status" value="1"/>
</dbReference>
<dbReference type="PANTHER" id="PTHR42916:SF1">
    <property type="entry name" value="PROTEIN PHYLLO, CHLOROPLASTIC"/>
    <property type="match status" value="1"/>
</dbReference>
<dbReference type="Pfam" id="PF02775">
    <property type="entry name" value="TPP_enzyme_C"/>
    <property type="match status" value="1"/>
</dbReference>
<dbReference type="Pfam" id="PF16582">
    <property type="entry name" value="TPP_enzyme_M_2"/>
    <property type="match status" value="1"/>
</dbReference>
<dbReference type="Pfam" id="PF02776">
    <property type="entry name" value="TPP_enzyme_N"/>
    <property type="match status" value="1"/>
</dbReference>
<dbReference type="PIRSF" id="PIRSF004983">
    <property type="entry name" value="MenD"/>
    <property type="match status" value="1"/>
</dbReference>
<dbReference type="SUPFAM" id="SSF52518">
    <property type="entry name" value="Thiamin diphosphate-binding fold (THDP-binding)"/>
    <property type="match status" value="2"/>
</dbReference>
<organism>
    <name type="scientific">Bacteroides thetaiotaomicron (strain ATCC 29148 / DSM 2079 / JCM 5827 / CCUG 10774 / NCTC 10582 / VPI-5482 / E50)</name>
    <dbReference type="NCBI Taxonomy" id="226186"/>
    <lineage>
        <taxon>Bacteria</taxon>
        <taxon>Pseudomonadati</taxon>
        <taxon>Bacteroidota</taxon>
        <taxon>Bacteroidia</taxon>
        <taxon>Bacteroidales</taxon>
        <taxon>Bacteroidaceae</taxon>
        <taxon>Bacteroides</taxon>
    </lineage>
</organism>